<gene>
    <name type="primary">scrA</name>
    <name type="ORF">DDB_G0285253</name>
</gene>
<dbReference type="EMBL" id="AF079805">
    <property type="protein sequence ID" value="AAD29083.1"/>
    <property type="molecule type" value="mRNA"/>
</dbReference>
<dbReference type="EMBL" id="AAFI02000077">
    <property type="protein sequence ID" value="EAL64790.1"/>
    <property type="molecule type" value="Genomic_DNA"/>
</dbReference>
<dbReference type="RefSeq" id="XP_638311.1">
    <property type="nucleotide sequence ID" value="XM_633219.1"/>
</dbReference>
<dbReference type="SMR" id="Q54NF8"/>
<dbReference type="FunCoup" id="Q54NF8">
    <property type="interactions" value="25"/>
</dbReference>
<dbReference type="IntAct" id="Q54NF8">
    <property type="interactions" value="3"/>
</dbReference>
<dbReference type="STRING" id="44689.Q54NF8"/>
<dbReference type="PaxDb" id="44689-DDB0191148"/>
<dbReference type="EnsemblProtists" id="EAL64790">
    <property type="protein sequence ID" value="EAL64790"/>
    <property type="gene ID" value="DDB_G0285253"/>
</dbReference>
<dbReference type="GeneID" id="8625028"/>
<dbReference type="KEGG" id="ddi:DDB_G0285253"/>
<dbReference type="dictyBase" id="DDB_G0285253">
    <property type="gene designation" value="scrA"/>
</dbReference>
<dbReference type="VEuPathDB" id="AmoebaDB:DDB_G0285253"/>
<dbReference type="eggNOG" id="KOG1830">
    <property type="taxonomic scope" value="Eukaryota"/>
</dbReference>
<dbReference type="HOGENOM" id="CLU_036022_1_0_1"/>
<dbReference type="InParanoid" id="Q54NF8"/>
<dbReference type="OMA" id="WGEQESN"/>
<dbReference type="Reactome" id="R-DDI-2029482">
    <property type="pathway name" value="Regulation of actin dynamics for phagocytic cup formation"/>
</dbReference>
<dbReference type="Reactome" id="R-DDI-5663213">
    <property type="pathway name" value="RHO GTPases Activate WASPs and WAVEs"/>
</dbReference>
<dbReference type="Reactome" id="R-DDI-9013149">
    <property type="pathway name" value="RAC1 GTPase cycle"/>
</dbReference>
<dbReference type="Reactome" id="R-DDI-9013404">
    <property type="pathway name" value="RAC2 GTPase cycle"/>
</dbReference>
<dbReference type="Reactome" id="R-DDI-9013423">
    <property type="pathway name" value="RAC3 GTPase cycle"/>
</dbReference>
<dbReference type="PRO" id="PR:Q54NF8"/>
<dbReference type="Proteomes" id="UP000002195">
    <property type="component" value="Chromosome 4"/>
</dbReference>
<dbReference type="GO" id="GO:0015629">
    <property type="term" value="C:actin cytoskeleton"/>
    <property type="evidence" value="ECO:0000304"/>
    <property type="project" value="dictyBase"/>
</dbReference>
<dbReference type="GO" id="GO:0005938">
    <property type="term" value="C:cell cortex"/>
    <property type="evidence" value="ECO:0000314"/>
    <property type="project" value="dictyBase"/>
</dbReference>
<dbReference type="GO" id="GO:0031252">
    <property type="term" value="C:cell leading edge"/>
    <property type="evidence" value="ECO:0000314"/>
    <property type="project" value="dictyBase"/>
</dbReference>
<dbReference type="GO" id="GO:0060187">
    <property type="term" value="C:cell pole"/>
    <property type="evidence" value="ECO:0000314"/>
    <property type="project" value="dictyBase"/>
</dbReference>
<dbReference type="GO" id="GO:0005911">
    <property type="term" value="C:cell-cell junction"/>
    <property type="evidence" value="ECO:0000305"/>
    <property type="project" value="dictyBase"/>
</dbReference>
<dbReference type="GO" id="GO:0005829">
    <property type="term" value="C:cytosol"/>
    <property type="evidence" value="ECO:0000304"/>
    <property type="project" value="dictyBase"/>
</dbReference>
<dbReference type="GO" id="GO:0032433">
    <property type="term" value="C:filopodium tip"/>
    <property type="evidence" value="ECO:0000305"/>
    <property type="project" value="dictyBase"/>
</dbReference>
<dbReference type="GO" id="GO:0031143">
    <property type="term" value="C:pseudopodium"/>
    <property type="evidence" value="ECO:0000314"/>
    <property type="project" value="dictyBase"/>
</dbReference>
<dbReference type="GO" id="GO:0001726">
    <property type="term" value="C:ruffle"/>
    <property type="evidence" value="ECO:0000314"/>
    <property type="project" value="dictyBase"/>
</dbReference>
<dbReference type="GO" id="GO:0031209">
    <property type="term" value="C:SCAR complex"/>
    <property type="evidence" value="ECO:0000314"/>
    <property type="project" value="dictyBase"/>
</dbReference>
<dbReference type="GO" id="GO:0003779">
    <property type="term" value="F:actin binding"/>
    <property type="evidence" value="ECO:0007669"/>
    <property type="project" value="UniProtKB-KW"/>
</dbReference>
<dbReference type="GO" id="GO:0071933">
    <property type="term" value="F:Arp2/3 complex binding"/>
    <property type="evidence" value="ECO:0000318"/>
    <property type="project" value="GO_Central"/>
</dbReference>
<dbReference type="GO" id="GO:0060090">
    <property type="term" value="F:molecular adaptor activity"/>
    <property type="evidence" value="ECO:0000314"/>
    <property type="project" value="dictyBase"/>
</dbReference>
<dbReference type="GO" id="GO:0034237">
    <property type="term" value="F:protein kinase A regulatory subunit binding"/>
    <property type="evidence" value="ECO:0000318"/>
    <property type="project" value="GO_Central"/>
</dbReference>
<dbReference type="GO" id="GO:0030036">
    <property type="term" value="P:actin cytoskeleton organization"/>
    <property type="evidence" value="ECO:0000318"/>
    <property type="project" value="GO_Central"/>
</dbReference>
<dbReference type="GO" id="GO:0007015">
    <property type="term" value="P:actin filament organization"/>
    <property type="evidence" value="ECO:0000314"/>
    <property type="project" value="dictyBase"/>
</dbReference>
<dbReference type="GO" id="GO:0001667">
    <property type="term" value="P:ameboidal-type cell migration"/>
    <property type="evidence" value="ECO:0000315"/>
    <property type="project" value="dictyBase"/>
</dbReference>
<dbReference type="GO" id="GO:0032060">
    <property type="term" value="P:bleb assembly"/>
    <property type="evidence" value="ECO:0000315"/>
    <property type="project" value="dictyBase"/>
</dbReference>
<dbReference type="GO" id="GO:0031589">
    <property type="term" value="P:cell-substrate adhesion"/>
    <property type="evidence" value="ECO:0000315"/>
    <property type="project" value="dictyBase"/>
</dbReference>
<dbReference type="GO" id="GO:0043327">
    <property type="term" value="P:chemotaxis to cAMP"/>
    <property type="evidence" value="ECO:0000314"/>
    <property type="project" value="dictyBase"/>
</dbReference>
<dbReference type="GO" id="GO:0030866">
    <property type="term" value="P:cortical actin cytoskeleton organization"/>
    <property type="evidence" value="ECO:0000315"/>
    <property type="project" value="dictyBase"/>
</dbReference>
<dbReference type="GO" id="GO:0006887">
    <property type="term" value="P:exocytosis"/>
    <property type="evidence" value="ECO:0000315"/>
    <property type="project" value="dictyBase"/>
</dbReference>
<dbReference type="GO" id="GO:0140986">
    <property type="term" value="P:G protein-coupled chemorepellent receptor signaling pathway"/>
    <property type="evidence" value="ECO:0000315"/>
    <property type="project" value="dictyBase"/>
</dbReference>
<dbReference type="GO" id="GO:1902774">
    <property type="term" value="P:late endosome to lysosome transport"/>
    <property type="evidence" value="ECO:0000315"/>
    <property type="project" value="dictyBase"/>
</dbReference>
<dbReference type="GO" id="GO:0044351">
    <property type="term" value="P:macropinocytosis"/>
    <property type="evidence" value="ECO:0000315"/>
    <property type="project" value="dictyBase"/>
</dbReference>
<dbReference type="GO" id="GO:0000281">
    <property type="term" value="P:mitotic cytokinesis"/>
    <property type="evidence" value="ECO:0000315"/>
    <property type="project" value="dictyBase"/>
</dbReference>
<dbReference type="GO" id="GO:0007052">
    <property type="term" value="P:mitotic spindle organization"/>
    <property type="evidence" value="ECO:0000315"/>
    <property type="project" value="dictyBase"/>
</dbReference>
<dbReference type="GO" id="GO:0006909">
    <property type="term" value="P:phagocytosis"/>
    <property type="evidence" value="ECO:0000315"/>
    <property type="project" value="dictyBase"/>
</dbReference>
<dbReference type="GO" id="GO:0006907">
    <property type="term" value="P:pinocytosis"/>
    <property type="evidence" value="ECO:0000304"/>
    <property type="project" value="dictyBase"/>
</dbReference>
<dbReference type="GO" id="GO:0030838">
    <property type="term" value="P:positive regulation of actin filament polymerization"/>
    <property type="evidence" value="ECO:0000315"/>
    <property type="project" value="dictyBase"/>
</dbReference>
<dbReference type="GO" id="GO:2000601">
    <property type="term" value="P:positive regulation of Arp2/3 complex-mediated actin nucleation"/>
    <property type="evidence" value="ECO:0000318"/>
    <property type="project" value="GO_Central"/>
</dbReference>
<dbReference type="GO" id="GO:0031269">
    <property type="term" value="P:pseudopodium assembly"/>
    <property type="evidence" value="ECO:0000315"/>
    <property type="project" value="dictyBase"/>
</dbReference>
<dbReference type="GO" id="GO:0008064">
    <property type="term" value="P:regulation of actin polymerization or depolymerization"/>
    <property type="evidence" value="ECO:0000315"/>
    <property type="project" value="dictyBase"/>
</dbReference>
<dbReference type="GO" id="GO:0031288">
    <property type="term" value="P:sorocarp morphogenesis"/>
    <property type="evidence" value="ECO:0000315"/>
    <property type="project" value="dictyBase"/>
</dbReference>
<dbReference type="Gene3D" id="1.20.5.340">
    <property type="match status" value="1"/>
</dbReference>
<dbReference type="Gene3D" id="6.10.280.150">
    <property type="match status" value="2"/>
</dbReference>
<dbReference type="InterPro" id="IPR028288">
    <property type="entry name" value="SCAR/WAVE_fam"/>
</dbReference>
<dbReference type="InterPro" id="IPR003124">
    <property type="entry name" value="WH2_dom"/>
</dbReference>
<dbReference type="PANTHER" id="PTHR12902">
    <property type="entry name" value="WASP-1"/>
    <property type="match status" value="1"/>
</dbReference>
<dbReference type="PANTHER" id="PTHR12902:SF1">
    <property type="entry name" value="WISKOTT-ALDRICH SYNDROME PROTEIN FAMILY MEMBER"/>
    <property type="match status" value="1"/>
</dbReference>
<dbReference type="PROSITE" id="PS51082">
    <property type="entry name" value="WH2"/>
    <property type="match status" value="1"/>
</dbReference>
<evidence type="ECO:0000250" key="1"/>
<evidence type="ECO:0000255" key="2"/>
<evidence type="ECO:0000255" key="3">
    <source>
        <dbReference type="PROSITE-ProRule" id="PRU00406"/>
    </source>
</evidence>
<evidence type="ECO:0000256" key="4">
    <source>
        <dbReference type="SAM" id="MobiDB-lite"/>
    </source>
</evidence>
<evidence type="ECO:0000269" key="5">
    <source>
    </source>
</evidence>
<evidence type="ECO:0000269" key="6">
    <source>
    </source>
</evidence>
<evidence type="ECO:0000269" key="7">
    <source>
    </source>
</evidence>
<evidence type="ECO:0000269" key="8">
    <source>
    </source>
</evidence>
<evidence type="ECO:0000269" key="9">
    <source>
    </source>
</evidence>
<evidence type="ECO:0000305" key="10"/>
<name>SCAR_DICDI</name>
<reference key="1">
    <citation type="journal article" date="1998" name="J. Cell Biol.">
        <title>SCAR, a WASP-related protein, isolated as a suppressor of receptor defects in late Dictyostelium development.</title>
        <authorList>
            <person name="Bear J.E."/>
            <person name="Rawls J.F."/>
            <person name="Saxe C.L. III"/>
        </authorList>
    </citation>
    <scope>NUCLEOTIDE SEQUENCE [MRNA]</scope>
    <scope>FUNCTION</scope>
    <scope>DEVELOPMENTAL STAGE</scope>
    <scope>DISRUPTION PHENOTYPE</scope>
</reference>
<reference key="2">
    <citation type="journal article" date="2005" name="Nature">
        <title>The genome of the social amoeba Dictyostelium discoideum.</title>
        <authorList>
            <person name="Eichinger L."/>
            <person name="Pachebat J.A."/>
            <person name="Gloeckner G."/>
            <person name="Rajandream M.A."/>
            <person name="Sucgang R."/>
            <person name="Berriman M."/>
            <person name="Song J."/>
            <person name="Olsen R."/>
            <person name="Szafranski K."/>
            <person name="Xu Q."/>
            <person name="Tunggal B."/>
            <person name="Kummerfeld S."/>
            <person name="Madera M."/>
            <person name="Konfortov B.A."/>
            <person name="Rivero F."/>
            <person name="Bankier A.T."/>
            <person name="Lehmann R."/>
            <person name="Hamlin N."/>
            <person name="Davies R."/>
            <person name="Gaudet P."/>
            <person name="Fey P."/>
            <person name="Pilcher K."/>
            <person name="Chen G."/>
            <person name="Saunders D."/>
            <person name="Sodergren E.J."/>
            <person name="Davis P."/>
            <person name="Kerhornou A."/>
            <person name="Nie X."/>
            <person name="Hall N."/>
            <person name="Anjard C."/>
            <person name="Hemphill L."/>
            <person name="Bason N."/>
            <person name="Farbrother P."/>
            <person name="Desany B."/>
            <person name="Just E."/>
            <person name="Morio T."/>
            <person name="Rost R."/>
            <person name="Churcher C.M."/>
            <person name="Cooper J."/>
            <person name="Haydock S."/>
            <person name="van Driessche N."/>
            <person name="Cronin A."/>
            <person name="Goodhead I."/>
            <person name="Muzny D.M."/>
            <person name="Mourier T."/>
            <person name="Pain A."/>
            <person name="Lu M."/>
            <person name="Harper D."/>
            <person name="Lindsay R."/>
            <person name="Hauser H."/>
            <person name="James K.D."/>
            <person name="Quiles M."/>
            <person name="Madan Babu M."/>
            <person name="Saito T."/>
            <person name="Buchrieser C."/>
            <person name="Wardroper A."/>
            <person name="Felder M."/>
            <person name="Thangavelu M."/>
            <person name="Johnson D."/>
            <person name="Knights A."/>
            <person name="Loulseged H."/>
            <person name="Mungall K.L."/>
            <person name="Oliver K."/>
            <person name="Price C."/>
            <person name="Quail M.A."/>
            <person name="Urushihara H."/>
            <person name="Hernandez J."/>
            <person name="Rabbinowitsch E."/>
            <person name="Steffen D."/>
            <person name="Sanders M."/>
            <person name="Ma J."/>
            <person name="Kohara Y."/>
            <person name="Sharp S."/>
            <person name="Simmonds M.N."/>
            <person name="Spiegler S."/>
            <person name="Tivey A."/>
            <person name="Sugano S."/>
            <person name="White B."/>
            <person name="Walker D."/>
            <person name="Woodward J.R."/>
            <person name="Winckler T."/>
            <person name="Tanaka Y."/>
            <person name="Shaulsky G."/>
            <person name="Schleicher M."/>
            <person name="Weinstock G.M."/>
            <person name="Rosenthal A."/>
            <person name="Cox E.C."/>
            <person name="Chisholm R.L."/>
            <person name="Gibbs R.A."/>
            <person name="Loomis W.F."/>
            <person name="Platzer M."/>
            <person name="Kay R.R."/>
            <person name="Williams J.G."/>
            <person name="Dear P.H."/>
            <person name="Noegel A.A."/>
            <person name="Barrell B.G."/>
            <person name="Kuspa A."/>
        </authorList>
    </citation>
    <scope>NUCLEOTIDE SEQUENCE [LARGE SCALE GENOMIC DNA]</scope>
    <source>
        <strain>AX4</strain>
    </source>
</reference>
<reference key="3">
    <citation type="journal article" date="2001" name="J. Cell Sci.">
        <title>The WASp-like protein scar regulates macropinocytosis, phagocytosis and endosomal membrane flow in Dictyostelium.</title>
        <authorList>
            <person name="Seastone D.J."/>
            <person name="Harris E."/>
            <person name="Temesvari L.A."/>
            <person name="Bear J.E."/>
            <person name="Saxe C.L."/>
            <person name="Cardelli J."/>
        </authorList>
    </citation>
    <scope>FUNCTION</scope>
</reference>
<reference key="4">
    <citation type="journal article" date="2003" name="Curr. Biol.">
        <title>PIR121 regulates pseudopod dynamics and SCAR activity in Dictyostelium.</title>
        <authorList>
            <person name="Blagg S.L."/>
            <person name="Stewart M."/>
            <person name="Sambles C."/>
            <person name="Insall R.H."/>
        </authorList>
    </citation>
    <scope>FUNCTION</scope>
</reference>
<reference key="5">
    <citation type="journal article" date="2006" name="Eur. J. Cell Biol.">
        <title>Cell motility and SCAR localisation in axenically growing Dictyostelium cells.</title>
        <authorList>
            <person name="Pollitt A.Y."/>
            <person name="Blagg S.L."/>
            <person name="Ibarra N."/>
            <person name="Insall R.H."/>
        </authorList>
    </citation>
    <scope>SUBCELLULAR LOCATION</scope>
</reference>
<reference key="6">
    <citation type="journal article" date="2007" name="Mol. Biol. Cell">
        <title>The N-terminus of Dictyostelium Scar interacts with Abi and HSPC300 and is essential for proper regulation and function.</title>
        <authorList>
            <person name="Caracino D."/>
            <person name="Jones C."/>
            <person name="Compton M."/>
            <person name="Saxe C.L. III"/>
        </authorList>
    </citation>
    <scope>IDENTIFICATION IN THE WAVE COMPLEX</scope>
    <scope>INTERACTION WITH BRICK1 AND ABIA</scope>
    <scope>FUNCTION</scope>
</reference>
<sequence>MVLITRYLPSVTDNNQPALEGQSKDQIVDTVITSTTVGIINQLTMLVAHSNSIFTALANDANLVTQRIEKLGSRIRPLIQSIPSIEDYHRNTSIDTMNSKPRAEFHADNSERNQHFTHASIPASINTVYEKCKPPPNLQLLDPYMDDGQKSLKLYTNPDFFMDEWVAEQQKLHEEARQRKRERREARLKKKGEKNEVEVKKVKSVTKVRYDPVTGEKITINIESPHTSSPQIQHQSNNTATPQHTTQHFGTNQYQAPPPPPLSQSSPSQQHSPINSYTPPPPPLNTSTPSPSSSFQGRPPSTGFNTPPPPMSNNNNMPPPPPMQQNGGAANNRLSVHNSAPIVAAPAPPPPPPPPSAPAPPPPPMAKAGGGASDIKPKASGARSDLLSSIMQGMALKPAEERKVAEAPKKEEALNVADILARRIAWAGDSDSSEDESDDSDWD</sequence>
<comment type="function">
    <text evidence="5 6 8 9">Involved in regulation of actin and microtubule organization. Regulates phagocytosis and macropinocytosis.</text>
</comment>
<comment type="subunit">
    <text evidence="8">Part of a Scar/WAVE complex containing brk1, scrA, abiA, pirA and napA. Interacts with brk1 and abiA.</text>
</comment>
<comment type="interaction">
    <interactant intactId="EBI-1808146">
        <id>Q54NF8</id>
    </interactant>
    <interactant intactId="EBI-1808197">
        <id>Q55FT9</id>
        <label>abiA</label>
    </interactant>
    <organismsDiffer>false</organismsDiffer>
    <experiments>3</experiments>
</comment>
<comment type="interaction">
    <interactant intactId="EBI-1808146">
        <id>Q54NF8</id>
    </interactant>
    <interactant intactId="EBI-1808171">
        <id>Q54X65</id>
        <label>brk1</label>
    </interactant>
    <organismsDiffer>false</organismsDiffer>
    <experiments>3</experiments>
</comment>
<comment type="subcellular location">
    <subcellularLocation>
        <location evidence="1">Cytoplasm</location>
        <location evidence="1">Cytoskeleton</location>
    </subcellularLocation>
    <subcellularLocation>
        <location evidence="7">Cell projection</location>
        <location evidence="7">Pseudopodium tip</location>
    </subcellularLocation>
    <subcellularLocation>
        <location evidence="7">Cell projection</location>
        <location evidence="7">Filopodium tip</location>
    </subcellularLocation>
    <text>Located at the tips of filopodia and at the tips of pseudopodia. In strains IR1, IR3, NC4A2, AX2, always enriched at the ends of actin protrusions. In strains AX3, AX4, JH8, JH10, DH1, does not seem to associate with actin structures in vegetative cells, but similar to other strains in developed cells.</text>
</comment>
<comment type="developmental stage">
    <text evidence="9">Expressed at low levels during vegetative growth, and accumulates dramatically by 4 hours of development. Expression levels remain high through 12 hours, and drop off at 16 hours.</text>
</comment>
<comment type="disruption phenotype">
    <text evidence="9">Amoeba grow as very small cells in suspension culture. They have reduced levels of F-actin staining during vegetative growth, and abnormal cell morphology and actin distribution during chemotaxis.</text>
</comment>
<comment type="similarity">
    <text evidence="10">Belongs to the SCAR/WAVE family.</text>
</comment>
<proteinExistence type="evidence at protein level"/>
<accession>Q54NF8</accession>
<accession>Q9XYA8</accession>
<feature type="chain" id="PRO_0000331405" description="Protein SCAR">
    <location>
        <begin position="1"/>
        <end position="443"/>
    </location>
</feature>
<feature type="domain" description="WH2" evidence="3">
    <location>
        <begin position="382"/>
        <end position="399"/>
    </location>
</feature>
<feature type="region of interest" description="Interaction with brk1 and abiA">
    <location>
        <begin position="1"/>
        <end position="96"/>
    </location>
</feature>
<feature type="region of interest" description="Disordered" evidence="4">
    <location>
        <begin position="176"/>
        <end position="197"/>
    </location>
</feature>
<feature type="region of interest" description="Disordered" evidence="4">
    <location>
        <begin position="220"/>
        <end position="386"/>
    </location>
</feature>
<feature type="coiled-coil region" evidence="2">
    <location>
        <begin position="166"/>
        <end position="201"/>
    </location>
</feature>
<feature type="compositionally biased region" description="Basic residues" evidence="4">
    <location>
        <begin position="178"/>
        <end position="192"/>
    </location>
</feature>
<feature type="compositionally biased region" description="Polar residues" evidence="4">
    <location>
        <begin position="221"/>
        <end position="252"/>
    </location>
</feature>
<feature type="compositionally biased region" description="Low complexity" evidence="4">
    <location>
        <begin position="263"/>
        <end position="277"/>
    </location>
</feature>
<feature type="compositionally biased region" description="Low complexity" evidence="4">
    <location>
        <begin position="285"/>
        <end position="305"/>
    </location>
</feature>
<feature type="compositionally biased region" description="Pro residues" evidence="4">
    <location>
        <begin position="306"/>
        <end position="323"/>
    </location>
</feature>
<feature type="compositionally biased region" description="Polar residues" evidence="4">
    <location>
        <begin position="324"/>
        <end position="338"/>
    </location>
</feature>
<feature type="compositionally biased region" description="Pro residues" evidence="4">
    <location>
        <begin position="346"/>
        <end position="365"/>
    </location>
</feature>
<feature type="sequence conflict" description="In Ref. 1; AAD29083." evidence="10" ref="1">
    <original>A</original>
    <variation>G</variation>
    <location>
        <position position="344"/>
    </location>
</feature>
<protein>
    <recommendedName>
        <fullName>Protein SCAR</fullName>
    </recommendedName>
    <alternativeName>
        <fullName>Suppressor of cAMP receptor</fullName>
    </alternativeName>
</protein>
<keyword id="KW-0009">Actin-binding</keyword>
<keyword id="KW-0966">Cell projection</keyword>
<keyword id="KW-0175">Coiled coil</keyword>
<keyword id="KW-0963">Cytoplasm</keyword>
<keyword id="KW-0206">Cytoskeleton</keyword>
<keyword id="KW-0581">Phagocytosis</keyword>
<keyword id="KW-1185">Reference proteome</keyword>
<organism>
    <name type="scientific">Dictyostelium discoideum</name>
    <name type="common">Social amoeba</name>
    <dbReference type="NCBI Taxonomy" id="44689"/>
    <lineage>
        <taxon>Eukaryota</taxon>
        <taxon>Amoebozoa</taxon>
        <taxon>Evosea</taxon>
        <taxon>Eumycetozoa</taxon>
        <taxon>Dictyostelia</taxon>
        <taxon>Dictyosteliales</taxon>
        <taxon>Dictyosteliaceae</taxon>
        <taxon>Dictyostelium</taxon>
    </lineage>
</organism>